<reference key="1">
    <citation type="journal article" date="1995" name="Proc. Natl. Acad. Sci. U.S.A.">
        <title>Relationship between evolutionary rate and cellular location among the Inv/Spa invasion proteins of Salmonella enterica.</title>
        <authorList>
            <person name="Li J."/>
            <person name="Ochman H."/>
            <person name="Groisman E.A."/>
            <person name="Boyd E.F."/>
            <person name="Solomon F."/>
            <person name="Nelson K."/>
            <person name="Selander R.K."/>
        </authorList>
    </citation>
    <scope>NUCLEOTIDE SEQUENCE [GENOMIC DNA]</scope>
    <source>
        <strain>S53</strain>
    </source>
</reference>
<sequence>MSLRVRQIDRREWLLAQTATECQRHGQEATLEYPTRQGMWVRLSDAEKRWSAWIQPGDWLEHVSPALAGAAVSAGAEHLVVPWLAATERPFELPVPHLSCRRLCVENPVPGSALPEGKLLHIMSDRGGLWFEYLPELPAVGGGRPKMLRWPLRFVIGSSDTQRSLLGRIGIGDVLLIRTSRAEVYCYAKKLGHFNRVEGGIIVETLDIQHIEEENNTTETAETLPGLNQLPVKLEFVLYRKNVTLAELEAMGQQQLLSLPTNAELNVEIMANGVLLGNGELVQMNDTLGVEIHEWLSESGNGE</sequence>
<gene>
    <name type="primary">spaO</name>
</gene>
<accession>P0A1K8</accession>
<accession>Q53968</accession>
<accession>Q54015</accession>
<evidence type="ECO:0000305" key="1"/>
<name>SPAO_SALEN</name>
<comment type="function">
    <text>Involved in a secretory pathway responsible for the surface presentation of determinants needed for the entry of Salmonella species into mammalian cells.</text>
</comment>
<comment type="similarity">
    <text evidence="1">Belongs to the FliN/MopA/SpaO family.</text>
</comment>
<dbReference type="EMBL" id="U29365">
    <property type="protein sequence ID" value="AAC43854.1"/>
    <property type="molecule type" value="Genomic_DNA"/>
</dbReference>
<dbReference type="RefSeq" id="WP_000058730.1">
    <property type="nucleotide sequence ID" value="NZ_WIDC01000145.1"/>
</dbReference>
<dbReference type="PATRIC" id="fig|149539.316.peg.2935"/>
<dbReference type="OMA" id="IYNTKIF"/>
<dbReference type="GO" id="GO:0071978">
    <property type="term" value="P:bacterial-type flagellum-dependent swarming motility"/>
    <property type="evidence" value="ECO:0007669"/>
    <property type="project" value="TreeGrafter"/>
</dbReference>
<dbReference type="GO" id="GO:0050918">
    <property type="term" value="P:positive chemotaxis"/>
    <property type="evidence" value="ECO:0007669"/>
    <property type="project" value="TreeGrafter"/>
</dbReference>
<dbReference type="GO" id="GO:0030254">
    <property type="term" value="P:protein secretion by the type III secretion system"/>
    <property type="evidence" value="ECO:0007669"/>
    <property type="project" value="InterPro"/>
</dbReference>
<dbReference type="Gene3D" id="2.30.330.10">
    <property type="entry name" value="SpoA-like"/>
    <property type="match status" value="1"/>
</dbReference>
<dbReference type="InterPro" id="IPR001543">
    <property type="entry name" value="FliN-like_C"/>
</dbReference>
<dbReference type="InterPro" id="IPR036429">
    <property type="entry name" value="SpoA-like_sf"/>
</dbReference>
<dbReference type="InterPro" id="IPR003283">
    <property type="entry name" value="T3SS_OMP_SpaO"/>
</dbReference>
<dbReference type="InterPro" id="IPR013385">
    <property type="entry name" value="T3SS_SpaO/YscQ/SpaO"/>
</dbReference>
<dbReference type="NCBIfam" id="NF006018">
    <property type="entry name" value="PRK08158.1"/>
    <property type="match status" value="1"/>
</dbReference>
<dbReference type="NCBIfam" id="TIGR02551">
    <property type="entry name" value="SpaO_YscQ"/>
    <property type="match status" value="1"/>
</dbReference>
<dbReference type="PANTHER" id="PTHR30034">
    <property type="entry name" value="FLAGELLAR MOTOR SWITCH PROTEIN FLIM"/>
    <property type="match status" value="1"/>
</dbReference>
<dbReference type="PANTHER" id="PTHR30034:SF5">
    <property type="entry name" value="SECRETION SYSTEM APPARATUS PROTEIN SSAQ"/>
    <property type="match status" value="1"/>
</dbReference>
<dbReference type="Pfam" id="PF01052">
    <property type="entry name" value="FliMN_C"/>
    <property type="match status" value="1"/>
</dbReference>
<dbReference type="PRINTS" id="PR01339">
    <property type="entry name" value="TYPE3OMOPROT"/>
</dbReference>
<dbReference type="SUPFAM" id="SSF101801">
    <property type="entry name" value="Surface presentation of antigens (SPOA)"/>
    <property type="match status" value="1"/>
</dbReference>
<proteinExistence type="inferred from homology"/>
<protein>
    <recommendedName>
        <fullName>Surface presentation of antigens protein SpaO</fullName>
    </recommendedName>
</protein>
<feature type="chain" id="PRO_0000184124" description="Surface presentation of antigens protein SpaO">
    <location>
        <begin position="1"/>
        <end position="303"/>
    </location>
</feature>
<keyword id="KW-0843">Virulence</keyword>
<organism>
    <name type="scientific">Salmonella enteritidis</name>
    <dbReference type="NCBI Taxonomy" id="149539"/>
    <lineage>
        <taxon>Bacteria</taxon>
        <taxon>Pseudomonadati</taxon>
        <taxon>Pseudomonadota</taxon>
        <taxon>Gammaproteobacteria</taxon>
        <taxon>Enterobacterales</taxon>
        <taxon>Enterobacteriaceae</taxon>
        <taxon>Salmonella</taxon>
    </lineage>
</organism>